<name>CYCH_RHIME</name>
<accession>P45400</accession>
<sequence length="381" mass="40321">MLFWILVAILTAAVAAVLLLPLMRAAEPLPSRHSHDIEVYRDQLGELARDREAGLIGSEEAELARAEIARRMLSASAADQAVAERTPKRLLSNRLAQAFIFLCLPAVGLCLYLTTGSPGVPAQPLAARLADPGDDVNILIAKAENHLALNPQDGAGWDLLAPIYMRHGRLDDAVAAYDRAIRLLGPTPARMGGYAEALVAQAGGLVTAEAQNALQKALALDPDDPRSAFYLALGLKQEGKHAEALAAFRKLAESSPADAPWLSLVNQHIAELAAAPAGPGPAAPGDPAPGDIAAAKEMNAGDRQAMIRGMVDSLASRLKEDPANLEGWMRLVRSYVVLDQRDRAKDALHDGLRAFPATGEQGKQLLALARELGIDAGGEAE</sequence>
<organism>
    <name type="scientific">Rhizobium meliloti (strain 1021)</name>
    <name type="common">Ensifer meliloti</name>
    <name type="synonym">Sinorhizobium meliloti</name>
    <dbReference type="NCBI Taxonomy" id="266834"/>
    <lineage>
        <taxon>Bacteria</taxon>
        <taxon>Pseudomonadati</taxon>
        <taxon>Pseudomonadota</taxon>
        <taxon>Alphaproteobacteria</taxon>
        <taxon>Hyphomicrobiales</taxon>
        <taxon>Rhizobiaceae</taxon>
        <taxon>Sinorhizobium/Ensifer group</taxon>
        <taxon>Sinorhizobium</taxon>
    </lineage>
</organism>
<dbReference type="EMBL" id="X82560">
    <property type="protein sequence ID" value="CAA57904.1"/>
    <property type="molecule type" value="Genomic_DNA"/>
</dbReference>
<dbReference type="EMBL" id="AL591688">
    <property type="protein sequence ID" value="CAC45589.1"/>
    <property type="molecule type" value="Genomic_DNA"/>
</dbReference>
<dbReference type="PIR" id="S54748">
    <property type="entry name" value="S49614"/>
</dbReference>
<dbReference type="RefSeq" id="NP_385123.1">
    <property type="nucleotide sequence ID" value="NC_003047.1"/>
</dbReference>
<dbReference type="SMR" id="P45400"/>
<dbReference type="EnsemblBacteria" id="CAC45589">
    <property type="protein sequence ID" value="CAC45589"/>
    <property type="gene ID" value="SMc02361"/>
</dbReference>
<dbReference type="KEGG" id="sme:SMc02361"/>
<dbReference type="PATRIC" id="fig|266834.11.peg.2421"/>
<dbReference type="eggNOG" id="COG4235">
    <property type="taxonomic scope" value="Bacteria"/>
</dbReference>
<dbReference type="HOGENOM" id="CLU_036074_4_1_5"/>
<dbReference type="OrthoDB" id="9815847at2"/>
<dbReference type="Proteomes" id="UP000001976">
    <property type="component" value="Chromosome"/>
</dbReference>
<dbReference type="GO" id="GO:0005886">
    <property type="term" value="C:plasma membrane"/>
    <property type="evidence" value="ECO:0007669"/>
    <property type="project" value="UniProtKB-SubCell"/>
</dbReference>
<dbReference type="GO" id="GO:0017004">
    <property type="term" value="P:cytochrome complex assembly"/>
    <property type="evidence" value="ECO:0007669"/>
    <property type="project" value="UniProtKB-KW"/>
</dbReference>
<dbReference type="Gene3D" id="1.25.40.10">
    <property type="entry name" value="Tetratricopeptide repeat domain"/>
    <property type="match status" value="2"/>
</dbReference>
<dbReference type="InterPro" id="IPR051263">
    <property type="entry name" value="C-type_cytochrome_biogenesis"/>
</dbReference>
<dbReference type="InterPro" id="IPR017560">
    <property type="entry name" value="Cyt_c_biogenesis_CcmI"/>
</dbReference>
<dbReference type="InterPro" id="IPR011990">
    <property type="entry name" value="TPR-like_helical_dom_sf"/>
</dbReference>
<dbReference type="InterPro" id="IPR056413">
    <property type="entry name" value="TPR_CcmH_CycH"/>
</dbReference>
<dbReference type="NCBIfam" id="TIGR03142">
    <property type="entry name" value="cytochro_ccmI"/>
    <property type="match status" value="1"/>
</dbReference>
<dbReference type="PANTHER" id="PTHR47870">
    <property type="entry name" value="CYTOCHROME C-TYPE BIOGENESIS PROTEIN CCMH"/>
    <property type="match status" value="1"/>
</dbReference>
<dbReference type="PANTHER" id="PTHR47870:SF1">
    <property type="entry name" value="CYTOCHROME C-TYPE BIOGENESIS PROTEIN CCMH"/>
    <property type="match status" value="1"/>
</dbReference>
<dbReference type="Pfam" id="PF23914">
    <property type="entry name" value="TPR_CcmH_CycH"/>
    <property type="match status" value="1"/>
</dbReference>
<dbReference type="SUPFAM" id="SSF48452">
    <property type="entry name" value="TPR-like"/>
    <property type="match status" value="1"/>
</dbReference>
<dbReference type="PROSITE" id="PS50293">
    <property type="entry name" value="TPR_REGION"/>
    <property type="match status" value="1"/>
</dbReference>
<feature type="chain" id="PRO_0000201574" description="Cytochrome c-type biogenesis protein CycH">
    <location>
        <begin position="1"/>
        <end position="381"/>
    </location>
</feature>
<feature type="transmembrane region" description="Helical" evidence="1">
    <location>
        <begin position="2"/>
        <end position="22"/>
    </location>
</feature>
<feature type="transmembrane region" description="Helical" evidence="1">
    <location>
        <begin position="95"/>
        <end position="115"/>
    </location>
</feature>
<feature type="topological domain" description="Periplasmic" evidence="1">
    <location>
        <begin position="116"/>
        <end position="381"/>
    </location>
</feature>
<feature type="repeat" description="TPR 1">
    <location>
        <begin position="154"/>
        <end position="187"/>
    </location>
</feature>
<feature type="repeat" description="TPR 2">
    <location>
        <begin position="191"/>
        <end position="224"/>
    </location>
</feature>
<feature type="repeat" description="TPR 3">
    <location>
        <begin position="226"/>
        <end position="258"/>
    </location>
</feature>
<feature type="repeat" description="TPR 4">
    <location>
        <begin position="325"/>
        <end position="358"/>
    </location>
</feature>
<feature type="sequence conflict" description="In Ref. 1; CAA57904." evidence="2" ref="1">
    <original>S</original>
    <variation>A</variation>
    <location>
        <position position="74"/>
    </location>
</feature>
<feature type="sequence conflict" description="In Ref. 1; CAA57904." evidence="2" ref="1">
    <original>R</original>
    <variation>P</variation>
    <location>
        <position position="226"/>
    </location>
</feature>
<feature type="sequence conflict" description="In Ref. 1; CAA57904." evidence="2" ref="1">
    <original>K</original>
    <variation>R</variation>
    <location>
        <position position="240"/>
    </location>
</feature>
<feature type="sequence conflict" description="In Ref. 1; CAA57904." evidence="2" ref="1">
    <original>EL</original>
    <variation>DV</variation>
    <location>
        <begin position="271"/>
        <end position="272"/>
    </location>
</feature>
<feature type="sequence conflict" description="In Ref. 1." evidence="2" ref="1">
    <location>
        <begin position="280"/>
        <end position="281"/>
    </location>
</feature>
<feature type="sequence conflict" description="In Ref. 1; CAA57904." evidence="2" ref="1">
    <original>D</original>
    <variation>N</variation>
    <location>
        <position position="286"/>
    </location>
</feature>
<feature type="sequence conflict" description="In Ref. 1; CAA57904." evidence="2" ref="1">
    <original>M</original>
    <variation>I</variation>
    <location>
        <position position="329"/>
    </location>
</feature>
<reference key="1">
    <citation type="journal article" date="1995" name="Mol. Gen. Genet.">
        <title>The cycHJKL genes of Rhizobium meliloti involved in cytochrome c biogenesis are required for 'respiratory' nitrate reduction ex planta and for nitrogen fixation during symbiosis.</title>
        <authorList>
            <person name="Kereszt A."/>
            <person name="Slaska-Kiss K."/>
            <person name="Putnoky P."/>
            <person name="Banfalvi Z."/>
            <person name="Kondorosi A."/>
        </authorList>
    </citation>
    <scope>NUCLEOTIDE SEQUENCE [GENOMIC DNA]</scope>
    <source>
        <strain>AK631</strain>
    </source>
</reference>
<reference key="2">
    <citation type="journal article" date="2001" name="Proc. Natl. Acad. Sci. U.S.A.">
        <title>Analysis of the chromosome sequence of the legume symbiont Sinorhizobium meliloti strain 1021.</title>
        <authorList>
            <person name="Capela D."/>
            <person name="Barloy-Hubler F."/>
            <person name="Gouzy J."/>
            <person name="Bothe G."/>
            <person name="Ampe F."/>
            <person name="Batut J."/>
            <person name="Boistard P."/>
            <person name="Becker A."/>
            <person name="Boutry M."/>
            <person name="Cadieu E."/>
            <person name="Dreano S."/>
            <person name="Gloux S."/>
            <person name="Godrie T."/>
            <person name="Goffeau A."/>
            <person name="Kahn D."/>
            <person name="Kiss E."/>
            <person name="Lelaure V."/>
            <person name="Masuy D."/>
            <person name="Pohl T."/>
            <person name="Portetelle D."/>
            <person name="Puehler A."/>
            <person name="Purnelle B."/>
            <person name="Ramsperger U."/>
            <person name="Renard C."/>
            <person name="Thebault P."/>
            <person name="Vandenbol M."/>
            <person name="Weidner S."/>
            <person name="Galibert F."/>
        </authorList>
    </citation>
    <scope>NUCLEOTIDE SEQUENCE [LARGE SCALE GENOMIC DNA]</scope>
    <source>
        <strain>1021</strain>
    </source>
</reference>
<reference key="3">
    <citation type="journal article" date="2001" name="Science">
        <title>The composite genome of the legume symbiont Sinorhizobium meliloti.</title>
        <authorList>
            <person name="Galibert F."/>
            <person name="Finan T.M."/>
            <person name="Long S.R."/>
            <person name="Puehler A."/>
            <person name="Abola P."/>
            <person name="Ampe F."/>
            <person name="Barloy-Hubler F."/>
            <person name="Barnett M.J."/>
            <person name="Becker A."/>
            <person name="Boistard P."/>
            <person name="Bothe G."/>
            <person name="Boutry M."/>
            <person name="Bowser L."/>
            <person name="Buhrmester J."/>
            <person name="Cadieu E."/>
            <person name="Capela D."/>
            <person name="Chain P."/>
            <person name="Cowie A."/>
            <person name="Davis R.W."/>
            <person name="Dreano S."/>
            <person name="Federspiel N.A."/>
            <person name="Fisher R.F."/>
            <person name="Gloux S."/>
            <person name="Godrie T."/>
            <person name="Goffeau A."/>
            <person name="Golding B."/>
            <person name="Gouzy J."/>
            <person name="Gurjal M."/>
            <person name="Hernandez-Lucas I."/>
            <person name="Hong A."/>
            <person name="Huizar L."/>
            <person name="Hyman R.W."/>
            <person name="Jones T."/>
            <person name="Kahn D."/>
            <person name="Kahn M.L."/>
            <person name="Kalman S."/>
            <person name="Keating D.H."/>
            <person name="Kiss E."/>
            <person name="Komp C."/>
            <person name="Lelaure V."/>
            <person name="Masuy D."/>
            <person name="Palm C."/>
            <person name="Peck M.C."/>
            <person name="Pohl T.M."/>
            <person name="Portetelle D."/>
            <person name="Purnelle B."/>
            <person name="Ramsperger U."/>
            <person name="Surzycki R."/>
            <person name="Thebault P."/>
            <person name="Vandenbol M."/>
            <person name="Vorhoelter F.J."/>
            <person name="Weidner S."/>
            <person name="Wells D.H."/>
            <person name="Wong K."/>
            <person name="Yeh K.-C."/>
            <person name="Batut J."/>
        </authorList>
    </citation>
    <scope>NUCLEOTIDE SEQUENCE [LARGE SCALE GENOMIC DNA]</scope>
    <source>
        <strain>1021</strain>
    </source>
</reference>
<comment type="function">
    <text>Required for the biogenesis of c-type cytochromes. Possible subunit of a heme lyase.</text>
</comment>
<comment type="subcellular location">
    <subcellularLocation>
        <location evidence="2">Cell inner membrane</location>
        <topology evidence="2">Multi-pass membrane protein</topology>
        <orientation evidence="2">Periplasmic side</orientation>
    </subcellularLocation>
</comment>
<comment type="similarity">
    <text evidence="2">Belongs to the CycH family.</text>
</comment>
<protein>
    <recommendedName>
        <fullName>Cytochrome c-type biogenesis protein CycH</fullName>
    </recommendedName>
</protein>
<keyword id="KW-0997">Cell inner membrane</keyword>
<keyword id="KW-1003">Cell membrane</keyword>
<keyword id="KW-0201">Cytochrome c-type biogenesis</keyword>
<keyword id="KW-0472">Membrane</keyword>
<keyword id="KW-1185">Reference proteome</keyword>
<keyword id="KW-0677">Repeat</keyword>
<keyword id="KW-0802">TPR repeat</keyword>
<keyword id="KW-0812">Transmembrane</keyword>
<keyword id="KW-1133">Transmembrane helix</keyword>
<proteinExistence type="inferred from homology"/>
<gene>
    <name type="primary">cycH</name>
    <name type="ordered locus">R01017</name>
    <name type="ORF">SMc02361</name>
</gene>
<evidence type="ECO:0000255" key="1"/>
<evidence type="ECO:0000305" key="2"/>